<dbReference type="EMBL" id="AJ235272">
    <property type="protein sequence ID" value="CAA14998.1"/>
    <property type="molecule type" value="Genomic_DNA"/>
</dbReference>
<dbReference type="PIR" id="D71659">
    <property type="entry name" value="D71659"/>
</dbReference>
<dbReference type="RefSeq" id="NP_220921.1">
    <property type="nucleotide sequence ID" value="NC_000963.1"/>
</dbReference>
<dbReference type="STRING" id="272947.gene:17555629"/>
<dbReference type="EnsemblBacteria" id="CAA14998">
    <property type="protein sequence ID" value="CAA14998"/>
    <property type="gene ID" value="CAA14998"/>
</dbReference>
<dbReference type="KEGG" id="rpr:RP549"/>
<dbReference type="PATRIC" id="fig|272947.5.peg.560"/>
<dbReference type="eggNOG" id="COG1381">
    <property type="taxonomic scope" value="Bacteria"/>
</dbReference>
<dbReference type="HOGENOM" id="CLU_1884196_0_0_5"/>
<dbReference type="OrthoDB" id="9804792at2"/>
<dbReference type="Proteomes" id="UP000002480">
    <property type="component" value="Chromosome"/>
</dbReference>
<dbReference type="GO" id="GO:0006310">
    <property type="term" value="P:DNA recombination"/>
    <property type="evidence" value="ECO:0007669"/>
    <property type="project" value="InterPro"/>
</dbReference>
<dbReference type="GO" id="GO:0006281">
    <property type="term" value="P:DNA repair"/>
    <property type="evidence" value="ECO:0007669"/>
    <property type="project" value="InterPro"/>
</dbReference>
<dbReference type="Gene3D" id="1.20.1440.120">
    <property type="entry name" value="Recombination protein O, C-terminal domain"/>
    <property type="match status" value="1"/>
</dbReference>
<dbReference type="InterPro" id="IPR037278">
    <property type="entry name" value="ARFGAP/RecO"/>
</dbReference>
<dbReference type="InterPro" id="IPR003717">
    <property type="entry name" value="RecO"/>
</dbReference>
<dbReference type="InterPro" id="IPR042242">
    <property type="entry name" value="RecO_C"/>
</dbReference>
<dbReference type="NCBIfam" id="TIGR00613">
    <property type="entry name" value="reco"/>
    <property type="match status" value="1"/>
</dbReference>
<dbReference type="Pfam" id="PF02565">
    <property type="entry name" value="RecO_C"/>
    <property type="match status" value="1"/>
</dbReference>
<dbReference type="SUPFAM" id="SSF57863">
    <property type="entry name" value="ArfGap/RecO-like zinc finger"/>
    <property type="match status" value="1"/>
</dbReference>
<organism>
    <name type="scientific">Rickettsia prowazekii (strain Madrid E)</name>
    <dbReference type="NCBI Taxonomy" id="272947"/>
    <lineage>
        <taxon>Bacteria</taxon>
        <taxon>Pseudomonadati</taxon>
        <taxon>Pseudomonadota</taxon>
        <taxon>Alphaproteobacteria</taxon>
        <taxon>Rickettsiales</taxon>
        <taxon>Rickettsiaceae</taxon>
        <taxon>Rickettsieae</taxon>
        <taxon>Rickettsia</taxon>
        <taxon>typhus group</taxon>
    </lineage>
</organism>
<gene>
    <name type="ordered locus">RP549</name>
</gene>
<protein>
    <recommendedName>
        <fullName>Uncharacterized protein RP549</fullName>
    </recommendedName>
</protein>
<feature type="chain" id="PRO_0000101393" description="Uncharacterized protein RP549">
    <location>
        <begin position="1"/>
        <end position="135"/>
    </location>
</feature>
<proteinExistence type="predicted"/>
<keyword id="KW-1185">Reference proteome</keyword>
<accession>Q9ZD01</accession>
<reference key="1">
    <citation type="journal article" date="1998" name="Nature">
        <title>The genome sequence of Rickettsia prowazekii and the origin of mitochondria.</title>
        <authorList>
            <person name="Andersson S.G.E."/>
            <person name="Zomorodipour A."/>
            <person name="Andersson J.O."/>
            <person name="Sicheritz-Ponten T."/>
            <person name="Alsmark U.C.M."/>
            <person name="Podowski R.M."/>
            <person name="Naeslund A.K."/>
            <person name="Eriksson A.-S."/>
            <person name="Winkler H.H."/>
            <person name="Kurland C.G."/>
        </authorList>
    </citation>
    <scope>NUCLEOTIDE SEQUENCE [LARGE SCALE GENOMIC DNA]</scope>
    <source>
        <strain>Madrid E</strain>
    </source>
</reference>
<name>Y549_RICPR</name>
<sequence length="135" mass="16052">MKEKNILFFFSFLINYLDNLSKNFCFRDYISFELNLLAETGYKLDLTKCCVSHVTTDLTYVSPKSARALSYKVGKPYRDKLLILPKFLLAKDSEITLEEKKQALTLTNYFFNRYLFHNNRQVKAREEFIEYITNI</sequence>